<reference key="1">
    <citation type="submission" date="2008-02" db="EMBL/GenBank/DDBJ databases">
        <title>Complete sequence of Haemophilus somnus 2336.</title>
        <authorList>
            <consortium name="US DOE Joint Genome Institute"/>
            <person name="Siddaramappa S."/>
            <person name="Duncan A.J."/>
            <person name="Challacombe J.F."/>
            <person name="Rainey D."/>
            <person name="Gillaspy A.F."/>
            <person name="Carson M."/>
            <person name="Gipson J."/>
            <person name="Gipson M."/>
            <person name="Bruce D."/>
            <person name="Detter J.C."/>
            <person name="Han C.S."/>
            <person name="Land M."/>
            <person name="Tapia R."/>
            <person name="Thompson L.S."/>
            <person name="Orvis J."/>
            <person name="Zaitshik J."/>
            <person name="Barnes G."/>
            <person name="Brettin T.S."/>
            <person name="Dyer D.W."/>
            <person name="Inzana T.J."/>
        </authorList>
    </citation>
    <scope>NUCLEOTIDE SEQUENCE [LARGE SCALE GENOMIC DNA]</scope>
    <source>
        <strain>2336</strain>
    </source>
</reference>
<evidence type="ECO:0000255" key="1">
    <source>
        <dbReference type="HAMAP-Rule" id="MF_00600"/>
    </source>
</evidence>
<gene>
    <name evidence="1" type="primary">groEL</name>
    <name evidence="1" type="synonym">groL</name>
    <name type="ordered locus">HSM_0767</name>
</gene>
<comment type="function">
    <text evidence="1">Together with its co-chaperonin GroES, plays an essential role in assisting protein folding. The GroEL-GroES system forms a nano-cage that allows encapsulation of the non-native substrate proteins and provides a physical environment optimized to promote and accelerate protein folding.</text>
</comment>
<comment type="catalytic activity">
    <reaction evidence="1">
        <text>ATP + H2O + a folded polypeptide = ADP + phosphate + an unfolded polypeptide.</text>
        <dbReference type="EC" id="5.6.1.7"/>
    </reaction>
</comment>
<comment type="subunit">
    <text evidence="1">Forms a cylinder of 14 subunits composed of two heptameric rings stacked back-to-back. Interacts with the co-chaperonin GroES.</text>
</comment>
<comment type="subcellular location">
    <subcellularLocation>
        <location evidence="1">Cytoplasm</location>
    </subcellularLocation>
</comment>
<comment type="similarity">
    <text evidence="1">Belongs to the chaperonin (HSP60) family.</text>
</comment>
<proteinExistence type="inferred from homology"/>
<sequence length="547" mass="57422">MTAKDVKFGNDARVKMLAGVNVLADAVKVTLGPKGRNVILDKAFGAPTITKDGVSVAREIELEDKFENMGAQMVKEVASKANDAAGDGTTTATVLAQAIVSEGLKAVAAGMNPMDLKRGIDKAVNAVVEELKILSKPCETSKEIEQVGTISANADETVGKLIAQAMEKVGKEGVITVEDGSGLSDELDVVEGMQFDRGYLSPYFINKPEAATVELDNPFILLVDKKISNIRELLPVLEGVAKAGKPLLIIAEDVEGEALATLVVNTMRGIVKVAAVKAPGFGDRRKAMLQDIAILTAGTVISEEIGMELEKATLEDLGQAKRVVINKDNTTIIDGIGDEAQIKGRVAQIRQQIEEATSDYDKEKLQERVAKLAGGVAVIKVGAATEVEMKEKKDRVDDALHATRAAVEEGIVAGGGVALIRAATKVATTLKGDNEDQDVGIKLALRAMEAPLRQIVTNAGEEASVVASAVKNGEGNFGYNAGTEQYGDMIAMGILDPTKVTRSALQFAASIAGLMVTTECMVADLPKEEKADLTGGMGGMGGMGGMM</sequence>
<feature type="chain" id="PRO_1000082477" description="Chaperonin GroEL">
    <location>
        <begin position="1"/>
        <end position="547"/>
    </location>
</feature>
<feature type="binding site" evidence="1">
    <location>
        <begin position="30"/>
        <end position="33"/>
    </location>
    <ligand>
        <name>ATP</name>
        <dbReference type="ChEBI" id="CHEBI:30616"/>
    </ligand>
</feature>
<feature type="binding site" evidence="1">
    <location>
        <position position="51"/>
    </location>
    <ligand>
        <name>ATP</name>
        <dbReference type="ChEBI" id="CHEBI:30616"/>
    </ligand>
</feature>
<feature type="binding site" evidence="1">
    <location>
        <begin position="87"/>
        <end position="91"/>
    </location>
    <ligand>
        <name>ATP</name>
        <dbReference type="ChEBI" id="CHEBI:30616"/>
    </ligand>
</feature>
<feature type="binding site" evidence="1">
    <location>
        <position position="415"/>
    </location>
    <ligand>
        <name>ATP</name>
        <dbReference type="ChEBI" id="CHEBI:30616"/>
    </ligand>
</feature>
<feature type="binding site" evidence="1">
    <location>
        <position position="496"/>
    </location>
    <ligand>
        <name>ATP</name>
        <dbReference type="ChEBI" id="CHEBI:30616"/>
    </ligand>
</feature>
<accession>B0USK6</accession>
<dbReference type="EC" id="5.6.1.7" evidence="1"/>
<dbReference type="EMBL" id="CP000947">
    <property type="protein sequence ID" value="ACA32437.1"/>
    <property type="molecule type" value="Genomic_DNA"/>
</dbReference>
<dbReference type="RefSeq" id="WP_011608625.1">
    <property type="nucleotide sequence ID" value="NC_010519.1"/>
</dbReference>
<dbReference type="SMR" id="B0USK6"/>
<dbReference type="STRING" id="228400.HSM_0767"/>
<dbReference type="GeneID" id="31487056"/>
<dbReference type="KEGG" id="hsm:HSM_0767"/>
<dbReference type="HOGENOM" id="CLU_016503_3_0_6"/>
<dbReference type="GO" id="GO:0005737">
    <property type="term" value="C:cytoplasm"/>
    <property type="evidence" value="ECO:0007669"/>
    <property type="project" value="UniProtKB-SubCell"/>
</dbReference>
<dbReference type="GO" id="GO:0005524">
    <property type="term" value="F:ATP binding"/>
    <property type="evidence" value="ECO:0007669"/>
    <property type="project" value="UniProtKB-UniRule"/>
</dbReference>
<dbReference type="GO" id="GO:0140662">
    <property type="term" value="F:ATP-dependent protein folding chaperone"/>
    <property type="evidence" value="ECO:0007669"/>
    <property type="project" value="InterPro"/>
</dbReference>
<dbReference type="GO" id="GO:0016853">
    <property type="term" value="F:isomerase activity"/>
    <property type="evidence" value="ECO:0007669"/>
    <property type="project" value="UniProtKB-KW"/>
</dbReference>
<dbReference type="GO" id="GO:0051082">
    <property type="term" value="F:unfolded protein binding"/>
    <property type="evidence" value="ECO:0007669"/>
    <property type="project" value="UniProtKB-UniRule"/>
</dbReference>
<dbReference type="GO" id="GO:0042026">
    <property type="term" value="P:protein refolding"/>
    <property type="evidence" value="ECO:0007669"/>
    <property type="project" value="UniProtKB-UniRule"/>
</dbReference>
<dbReference type="CDD" id="cd03344">
    <property type="entry name" value="GroEL"/>
    <property type="match status" value="1"/>
</dbReference>
<dbReference type="FunFam" id="1.10.560.10:FF:000001">
    <property type="entry name" value="60 kDa chaperonin"/>
    <property type="match status" value="1"/>
</dbReference>
<dbReference type="FunFam" id="3.50.7.10:FF:000001">
    <property type="entry name" value="60 kDa chaperonin"/>
    <property type="match status" value="1"/>
</dbReference>
<dbReference type="Gene3D" id="3.50.7.10">
    <property type="entry name" value="GroEL"/>
    <property type="match status" value="1"/>
</dbReference>
<dbReference type="Gene3D" id="1.10.560.10">
    <property type="entry name" value="GroEL-like equatorial domain"/>
    <property type="match status" value="1"/>
</dbReference>
<dbReference type="Gene3D" id="3.30.260.10">
    <property type="entry name" value="TCP-1-like chaperonin intermediate domain"/>
    <property type="match status" value="1"/>
</dbReference>
<dbReference type="HAMAP" id="MF_00600">
    <property type="entry name" value="CH60"/>
    <property type="match status" value="1"/>
</dbReference>
<dbReference type="InterPro" id="IPR018370">
    <property type="entry name" value="Chaperonin_Cpn60_CS"/>
</dbReference>
<dbReference type="InterPro" id="IPR001844">
    <property type="entry name" value="Cpn60/GroEL"/>
</dbReference>
<dbReference type="InterPro" id="IPR002423">
    <property type="entry name" value="Cpn60/GroEL/TCP-1"/>
</dbReference>
<dbReference type="InterPro" id="IPR027409">
    <property type="entry name" value="GroEL-like_apical_dom_sf"/>
</dbReference>
<dbReference type="InterPro" id="IPR027413">
    <property type="entry name" value="GROEL-like_equatorial_sf"/>
</dbReference>
<dbReference type="InterPro" id="IPR027410">
    <property type="entry name" value="TCP-1-like_intermed_sf"/>
</dbReference>
<dbReference type="NCBIfam" id="TIGR02348">
    <property type="entry name" value="GroEL"/>
    <property type="match status" value="1"/>
</dbReference>
<dbReference type="NCBIfam" id="NF000592">
    <property type="entry name" value="PRK00013.1"/>
    <property type="match status" value="1"/>
</dbReference>
<dbReference type="NCBIfam" id="NF009487">
    <property type="entry name" value="PRK12849.1"/>
    <property type="match status" value="1"/>
</dbReference>
<dbReference type="NCBIfam" id="NF009488">
    <property type="entry name" value="PRK12850.1"/>
    <property type="match status" value="1"/>
</dbReference>
<dbReference type="NCBIfam" id="NF009489">
    <property type="entry name" value="PRK12851.1"/>
    <property type="match status" value="1"/>
</dbReference>
<dbReference type="PANTHER" id="PTHR45633">
    <property type="entry name" value="60 KDA HEAT SHOCK PROTEIN, MITOCHONDRIAL"/>
    <property type="match status" value="1"/>
</dbReference>
<dbReference type="Pfam" id="PF00118">
    <property type="entry name" value="Cpn60_TCP1"/>
    <property type="match status" value="1"/>
</dbReference>
<dbReference type="PRINTS" id="PR00298">
    <property type="entry name" value="CHAPERONIN60"/>
</dbReference>
<dbReference type="SUPFAM" id="SSF52029">
    <property type="entry name" value="GroEL apical domain-like"/>
    <property type="match status" value="1"/>
</dbReference>
<dbReference type="SUPFAM" id="SSF48592">
    <property type="entry name" value="GroEL equatorial domain-like"/>
    <property type="match status" value="1"/>
</dbReference>
<dbReference type="SUPFAM" id="SSF54849">
    <property type="entry name" value="GroEL-intermediate domain like"/>
    <property type="match status" value="1"/>
</dbReference>
<dbReference type="PROSITE" id="PS00296">
    <property type="entry name" value="CHAPERONINS_CPN60"/>
    <property type="match status" value="1"/>
</dbReference>
<organism>
    <name type="scientific">Histophilus somni (strain 2336)</name>
    <name type="common">Haemophilus somnus</name>
    <dbReference type="NCBI Taxonomy" id="228400"/>
    <lineage>
        <taxon>Bacteria</taxon>
        <taxon>Pseudomonadati</taxon>
        <taxon>Pseudomonadota</taxon>
        <taxon>Gammaproteobacteria</taxon>
        <taxon>Pasteurellales</taxon>
        <taxon>Pasteurellaceae</taxon>
        <taxon>Histophilus</taxon>
    </lineage>
</organism>
<keyword id="KW-0067">ATP-binding</keyword>
<keyword id="KW-0143">Chaperone</keyword>
<keyword id="KW-0963">Cytoplasm</keyword>
<keyword id="KW-0413">Isomerase</keyword>
<keyword id="KW-0547">Nucleotide-binding</keyword>
<protein>
    <recommendedName>
        <fullName evidence="1">Chaperonin GroEL</fullName>
        <ecNumber evidence="1">5.6.1.7</ecNumber>
    </recommendedName>
    <alternativeName>
        <fullName evidence="1">60 kDa chaperonin</fullName>
    </alternativeName>
    <alternativeName>
        <fullName evidence="1">Chaperonin-60</fullName>
        <shortName evidence="1">Cpn60</shortName>
    </alternativeName>
</protein>
<name>CH60_HISS2</name>